<proteinExistence type="evidence at transcript level"/>
<feature type="chain" id="PRO_0000091847" description="Forkhead box protein I1">
    <location>
        <begin position="1"/>
        <end position="372"/>
    </location>
</feature>
<feature type="DNA-binding region" description="Fork-head" evidence="1">
    <location>
        <begin position="117"/>
        <end position="211"/>
    </location>
</feature>
<feature type="region of interest" description="Disordered" evidence="2">
    <location>
        <begin position="1"/>
        <end position="23"/>
    </location>
</feature>
<feature type="region of interest" description="Disordered" evidence="2">
    <location>
        <begin position="202"/>
        <end position="271"/>
    </location>
</feature>
<feature type="compositionally biased region" description="Low complexity" evidence="2">
    <location>
        <begin position="216"/>
        <end position="225"/>
    </location>
</feature>
<feature type="compositionally biased region" description="Low complexity" evidence="2">
    <location>
        <begin position="247"/>
        <end position="257"/>
    </location>
</feature>
<feature type="sequence conflict" description="In Ref. 1; BAB31957." evidence="5" ref="1">
    <original>L</original>
    <variation>F</variation>
    <location>
        <position position="66"/>
    </location>
</feature>
<dbReference type="EMBL" id="AK019994">
    <property type="protein sequence ID" value="BAB31957.2"/>
    <property type="molecule type" value="mRNA"/>
</dbReference>
<dbReference type="EMBL" id="AL671971">
    <property type="status" value="NOT_ANNOTATED_CDS"/>
    <property type="molecule type" value="Genomic_DNA"/>
</dbReference>
<dbReference type="EMBL" id="BC007475">
    <property type="protein sequence ID" value="AAH07475.2"/>
    <property type="molecule type" value="mRNA"/>
</dbReference>
<dbReference type="CCDS" id="CCDS24539.1"/>
<dbReference type="RefSeq" id="NP_076396.3">
    <property type="nucleotide sequence ID" value="NM_023907.4"/>
</dbReference>
<dbReference type="SMR" id="Q922I5"/>
<dbReference type="FunCoup" id="Q922I5">
    <property type="interactions" value="963"/>
</dbReference>
<dbReference type="STRING" id="10090.ENSMUSP00000058651"/>
<dbReference type="GlyGen" id="Q922I5">
    <property type="glycosylation" value="1 site"/>
</dbReference>
<dbReference type="iPTMnet" id="Q922I5"/>
<dbReference type="PhosphoSitePlus" id="Q922I5"/>
<dbReference type="PaxDb" id="10090-ENSMUSP00000058651"/>
<dbReference type="ProteomicsDB" id="267399"/>
<dbReference type="Antibodypedia" id="28812">
    <property type="antibodies" value="519 antibodies from 30 providers"/>
</dbReference>
<dbReference type="DNASU" id="14233"/>
<dbReference type="Ensembl" id="ENSMUST00000060271.3">
    <property type="protein sequence ID" value="ENSMUSP00000058651.3"/>
    <property type="gene ID" value="ENSMUSG00000047861.3"/>
</dbReference>
<dbReference type="GeneID" id="14233"/>
<dbReference type="KEGG" id="mmu:14233"/>
<dbReference type="UCSC" id="uc007ikw.1">
    <property type="organism name" value="mouse"/>
</dbReference>
<dbReference type="AGR" id="MGI:1096329"/>
<dbReference type="CTD" id="2299"/>
<dbReference type="MGI" id="MGI:1096329">
    <property type="gene designation" value="Foxi1"/>
</dbReference>
<dbReference type="VEuPathDB" id="HostDB:ENSMUSG00000047861"/>
<dbReference type="eggNOG" id="KOG2294">
    <property type="taxonomic scope" value="Eukaryota"/>
</dbReference>
<dbReference type="GeneTree" id="ENSGT00940000161316"/>
<dbReference type="HOGENOM" id="CLU_046860_1_0_1"/>
<dbReference type="InParanoid" id="Q922I5"/>
<dbReference type="OMA" id="GIIYHRE"/>
<dbReference type="OrthoDB" id="5402974at2759"/>
<dbReference type="PhylomeDB" id="Q922I5"/>
<dbReference type="TreeFam" id="TF316127"/>
<dbReference type="BioGRID-ORCS" id="14233">
    <property type="hits" value="6 hits in 76 CRISPR screens"/>
</dbReference>
<dbReference type="ChiTaRS" id="Foxi1">
    <property type="organism name" value="mouse"/>
</dbReference>
<dbReference type="PRO" id="PR:Q922I5"/>
<dbReference type="Proteomes" id="UP000000589">
    <property type="component" value="Chromosome 11"/>
</dbReference>
<dbReference type="RNAct" id="Q922I5">
    <property type="molecule type" value="protein"/>
</dbReference>
<dbReference type="Bgee" id="ENSMUSG00000047861">
    <property type="expression patterns" value="Expressed in inner medullary collecting duct and 60 other cell types or tissues"/>
</dbReference>
<dbReference type="GO" id="GO:0005730">
    <property type="term" value="C:nucleolus"/>
    <property type="evidence" value="ECO:0007669"/>
    <property type="project" value="Ensembl"/>
</dbReference>
<dbReference type="GO" id="GO:0005634">
    <property type="term" value="C:nucleus"/>
    <property type="evidence" value="ECO:0000305"/>
    <property type="project" value="UniProtKB"/>
</dbReference>
<dbReference type="GO" id="GO:0001228">
    <property type="term" value="F:DNA-binding transcription activator activity, RNA polymerase II-specific"/>
    <property type="evidence" value="ECO:0000314"/>
    <property type="project" value="NTNU_SB"/>
</dbReference>
<dbReference type="GO" id="GO:0000978">
    <property type="term" value="F:RNA polymerase II cis-regulatory region sequence-specific DNA binding"/>
    <property type="evidence" value="ECO:0000314"/>
    <property type="project" value="NTNU_SB"/>
</dbReference>
<dbReference type="GO" id="GO:0043565">
    <property type="term" value="F:sequence-specific DNA binding"/>
    <property type="evidence" value="ECO:0000314"/>
    <property type="project" value="UniProtKB"/>
</dbReference>
<dbReference type="GO" id="GO:0000976">
    <property type="term" value="F:transcription cis-regulatory region binding"/>
    <property type="evidence" value="ECO:0000314"/>
    <property type="project" value="MGI"/>
</dbReference>
<dbReference type="GO" id="GO:0042472">
    <property type="term" value="P:inner ear morphogenesis"/>
    <property type="evidence" value="ECO:0000315"/>
    <property type="project" value="MGI"/>
</dbReference>
<dbReference type="GO" id="GO:0045893">
    <property type="term" value="P:positive regulation of DNA-templated transcription"/>
    <property type="evidence" value="ECO:0000314"/>
    <property type="project" value="UniProtKB"/>
</dbReference>
<dbReference type="GO" id="GO:0045944">
    <property type="term" value="P:positive regulation of transcription by RNA polymerase II"/>
    <property type="evidence" value="ECO:0000314"/>
    <property type="project" value="NTNU_SB"/>
</dbReference>
<dbReference type="CDD" id="cd20053">
    <property type="entry name" value="FH_FOXI1"/>
    <property type="match status" value="1"/>
</dbReference>
<dbReference type="FunFam" id="1.10.10.10:FF:000016">
    <property type="entry name" value="Forkhead box protein I1"/>
    <property type="match status" value="1"/>
</dbReference>
<dbReference type="Gene3D" id="1.10.10.10">
    <property type="entry name" value="Winged helix-like DNA-binding domain superfamily/Winged helix DNA-binding domain"/>
    <property type="match status" value="1"/>
</dbReference>
<dbReference type="InterPro" id="IPR001766">
    <property type="entry name" value="Fork_head_dom"/>
</dbReference>
<dbReference type="InterPro" id="IPR050211">
    <property type="entry name" value="FOX_domain-containing"/>
</dbReference>
<dbReference type="InterPro" id="IPR018122">
    <property type="entry name" value="TF_fork_head_CS_1"/>
</dbReference>
<dbReference type="InterPro" id="IPR030456">
    <property type="entry name" value="TF_fork_head_CS_2"/>
</dbReference>
<dbReference type="InterPro" id="IPR036388">
    <property type="entry name" value="WH-like_DNA-bd_sf"/>
</dbReference>
<dbReference type="InterPro" id="IPR036390">
    <property type="entry name" value="WH_DNA-bd_sf"/>
</dbReference>
<dbReference type="PANTHER" id="PTHR11829">
    <property type="entry name" value="FORKHEAD BOX PROTEIN"/>
    <property type="match status" value="1"/>
</dbReference>
<dbReference type="PANTHER" id="PTHR11829:SF180">
    <property type="entry name" value="FORKHEAD BOX PROTEIN I1"/>
    <property type="match status" value="1"/>
</dbReference>
<dbReference type="Pfam" id="PF00250">
    <property type="entry name" value="Forkhead"/>
    <property type="match status" value="1"/>
</dbReference>
<dbReference type="PRINTS" id="PR00053">
    <property type="entry name" value="FORKHEAD"/>
</dbReference>
<dbReference type="SMART" id="SM00339">
    <property type="entry name" value="FH"/>
    <property type="match status" value="1"/>
</dbReference>
<dbReference type="SUPFAM" id="SSF46785">
    <property type="entry name" value="Winged helix' DNA-binding domain"/>
    <property type="match status" value="1"/>
</dbReference>
<dbReference type="PROSITE" id="PS00657">
    <property type="entry name" value="FORK_HEAD_1"/>
    <property type="match status" value="1"/>
</dbReference>
<dbReference type="PROSITE" id="PS00658">
    <property type="entry name" value="FORK_HEAD_2"/>
    <property type="match status" value="1"/>
</dbReference>
<dbReference type="PROSITE" id="PS50039">
    <property type="entry name" value="FORK_HEAD_3"/>
    <property type="match status" value="1"/>
</dbReference>
<evidence type="ECO:0000255" key="1">
    <source>
        <dbReference type="PROSITE-ProRule" id="PRU00089"/>
    </source>
</evidence>
<evidence type="ECO:0000256" key="2">
    <source>
        <dbReference type="SAM" id="MobiDB-lite"/>
    </source>
</evidence>
<evidence type="ECO:0000269" key="3">
    <source>
    </source>
</evidence>
<evidence type="ECO:0000269" key="4">
    <source>
    </source>
</evidence>
<evidence type="ECO:0000305" key="5"/>
<evidence type="ECO:0000312" key="6">
    <source>
        <dbReference type="EMBL" id="BAB31957.2"/>
    </source>
</evidence>
<name>FOXI1_MOUSE</name>
<organism>
    <name type="scientific">Mus musculus</name>
    <name type="common">Mouse</name>
    <dbReference type="NCBI Taxonomy" id="10090"/>
    <lineage>
        <taxon>Eukaryota</taxon>
        <taxon>Metazoa</taxon>
        <taxon>Chordata</taxon>
        <taxon>Craniata</taxon>
        <taxon>Vertebrata</taxon>
        <taxon>Euteleostomi</taxon>
        <taxon>Mammalia</taxon>
        <taxon>Eutheria</taxon>
        <taxon>Euarchontoglires</taxon>
        <taxon>Glires</taxon>
        <taxon>Rodentia</taxon>
        <taxon>Myomorpha</taxon>
        <taxon>Muroidea</taxon>
        <taxon>Muridae</taxon>
        <taxon>Murinae</taxon>
        <taxon>Mus</taxon>
        <taxon>Mus</taxon>
    </lineage>
</organism>
<sequence>MSSFDLPAPSPPRCSPQFPSIGQEPPEMNLYYENFFHPQGMPSPQRPTSFEGGGEYGTTPNPYLWLNGPAMTPPPYLPGTNASPFLPQAYGMQRQLLPSDLGWLPIPSQEELMKLVRPPYSYSALIAMAIHGAPDQRLTLSQIYQYVADNFPFYNKSKAGWQNSIRHNLSLNDCFKKVPRDEDDPGKGNYWTLDPNCEKMFDNGNFRRKRKRKSDSSSSTSSLASEKTENGLLASSPKPTEPQEVLDTASPDTTTSSPEKRSSPAPSGTPCLNNFLSTMTAYVSGTNPISRSVATPGLSSEPIDKMGQNSLNFNSYTPLTNLSSHGNGGEWANPVATNALGYGGSVFNQFSPHFYNSINTNGILFPREGTEV</sequence>
<gene>
    <name type="primary">Foxi1</name>
</gene>
<protein>
    <recommendedName>
        <fullName>Forkhead box protein I1</fullName>
    </recommendedName>
</protein>
<reference evidence="5 6" key="1">
    <citation type="journal article" date="2005" name="Science">
        <title>The transcriptional landscape of the mammalian genome.</title>
        <authorList>
            <person name="Carninci P."/>
            <person name="Kasukawa T."/>
            <person name="Katayama S."/>
            <person name="Gough J."/>
            <person name="Frith M.C."/>
            <person name="Maeda N."/>
            <person name="Oyama R."/>
            <person name="Ravasi T."/>
            <person name="Lenhard B."/>
            <person name="Wells C."/>
            <person name="Kodzius R."/>
            <person name="Shimokawa K."/>
            <person name="Bajic V.B."/>
            <person name="Brenner S.E."/>
            <person name="Batalov S."/>
            <person name="Forrest A.R."/>
            <person name="Zavolan M."/>
            <person name="Davis M.J."/>
            <person name="Wilming L.G."/>
            <person name="Aidinis V."/>
            <person name="Allen J.E."/>
            <person name="Ambesi-Impiombato A."/>
            <person name="Apweiler R."/>
            <person name="Aturaliya R.N."/>
            <person name="Bailey T.L."/>
            <person name="Bansal M."/>
            <person name="Baxter L."/>
            <person name="Beisel K.W."/>
            <person name="Bersano T."/>
            <person name="Bono H."/>
            <person name="Chalk A.M."/>
            <person name="Chiu K.P."/>
            <person name="Choudhary V."/>
            <person name="Christoffels A."/>
            <person name="Clutterbuck D.R."/>
            <person name="Crowe M.L."/>
            <person name="Dalla E."/>
            <person name="Dalrymple B.P."/>
            <person name="de Bono B."/>
            <person name="Della Gatta G."/>
            <person name="di Bernardo D."/>
            <person name="Down T."/>
            <person name="Engstrom P."/>
            <person name="Fagiolini M."/>
            <person name="Faulkner G."/>
            <person name="Fletcher C.F."/>
            <person name="Fukushima T."/>
            <person name="Furuno M."/>
            <person name="Futaki S."/>
            <person name="Gariboldi M."/>
            <person name="Georgii-Hemming P."/>
            <person name="Gingeras T.R."/>
            <person name="Gojobori T."/>
            <person name="Green R.E."/>
            <person name="Gustincich S."/>
            <person name="Harbers M."/>
            <person name="Hayashi Y."/>
            <person name="Hensch T.K."/>
            <person name="Hirokawa N."/>
            <person name="Hill D."/>
            <person name="Huminiecki L."/>
            <person name="Iacono M."/>
            <person name="Ikeo K."/>
            <person name="Iwama A."/>
            <person name="Ishikawa T."/>
            <person name="Jakt M."/>
            <person name="Kanapin A."/>
            <person name="Katoh M."/>
            <person name="Kawasawa Y."/>
            <person name="Kelso J."/>
            <person name="Kitamura H."/>
            <person name="Kitano H."/>
            <person name="Kollias G."/>
            <person name="Krishnan S.P."/>
            <person name="Kruger A."/>
            <person name="Kummerfeld S.K."/>
            <person name="Kurochkin I.V."/>
            <person name="Lareau L.F."/>
            <person name="Lazarevic D."/>
            <person name="Lipovich L."/>
            <person name="Liu J."/>
            <person name="Liuni S."/>
            <person name="McWilliam S."/>
            <person name="Madan Babu M."/>
            <person name="Madera M."/>
            <person name="Marchionni L."/>
            <person name="Matsuda H."/>
            <person name="Matsuzawa S."/>
            <person name="Miki H."/>
            <person name="Mignone F."/>
            <person name="Miyake S."/>
            <person name="Morris K."/>
            <person name="Mottagui-Tabar S."/>
            <person name="Mulder N."/>
            <person name="Nakano N."/>
            <person name="Nakauchi H."/>
            <person name="Ng P."/>
            <person name="Nilsson R."/>
            <person name="Nishiguchi S."/>
            <person name="Nishikawa S."/>
            <person name="Nori F."/>
            <person name="Ohara O."/>
            <person name="Okazaki Y."/>
            <person name="Orlando V."/>
            <person name="Pang K.C."/>
            <person name="Pavan W.J."/>
            <person name="Pavesi G."/>
            <person name="Pesole G."/>
            <person name="Petrovsky N."/>
            <person name="Piazza S."/>
            <person name="Reed J."/>
            <person name="Reid J.F."/>
            <person name="Ring B.Z."/>
            <person name="Ringwald M."/>
            <person name="Rost B."/>
            <person name="Ruan Y."/>
            <person name="Salzberg S.L."/>
            <person name="Sandelin A."/>
            <person name="Schneider C."/>
            <person name="Schoenbach C."/>
            <person name="Sekiguchi K."/>
            <person name="Semple C.A."/>
            <person name="Seno S."/>
            <person name="Sessa L."/>
            <person name="Sheng Y."/>
            <person name="Shibata Y."/>
            <person name="Shimada H."/>
            <person name="Shimada K."/>
            <person name="Silva D."/>
            <person name="Sinclair B."/>
            <person name="Sperling S."/>
            <person name="Stupka E."/>
            <person name="Sugiura K."/>
            <person name="Sultana R."/>
            <person name="Takenaka Y."/>
            <person name="Taki K."/>
            <person name="Tammoja K."/>
            <person name="Tan S.L."/>
            <person name="Tang S."/>
            <person name="Taylor M.S."/>
            <person name="Tegner J."/>
            <person name="Teichmann S.A."/>
            <person name="Ueda H.R."/>
            <person name="van Nimwegen E."/>
            <person name="Verardo R."/>
            <person name="Wei C.L."/>
            <person name="Yagi K."/>
            <person name="Yamanishi H."/>
            <person name="Zabarovsky E."/>
            <person name="Zhu S."/>
            <person name="Zimmer A."/>
            <person name="Hide W."/>
            <person name="Bult C."/>
            <person name="Grimmond S.M."/>
            <person name="Teasdale R.D."/>
            <person name="Liu E.T."/>
            <person name="Brusic V."/>
            <person name="Quackenbush J."/>
            <person name="Wahlestedt C."/>
            <person name="Mattick J.S."/>
            <person name="Hume D.A."/>
            <person name="Kai C."/>
            <person name="Sasaki D."/>
            <person name="Tomaru Y."/>
            <person name="Fukuda S."/>
            <person name="Kanamori-Katayama M."/>
            <person name="Suzuki M."/>
            <person name="Aoki J."/>
            <person name="Arakawa T."/>
            <person name="Iida J."/>
            <person name="Imamura K."/>
            <person name="Itoh M."/>
            <person name="Kato T."/>
            <person name="Kawaji H."/>
            <person name="Kawagashira N."/>
            <person name="Kawashima T."/>
            <person name="Kojima M."/>
            <person name="Kondo S."/>
            <person name="Konno H."/>
            <person name="Nakano K."/>
            <person name="Ninomiya N."/>
            <person name="Nishio T."/>
            <person name="Okada M."/>
            <person name="Plessy C."/>
            <person name="Shibata K."/>
            <person name="Shiraki T."/>
            <person name="Suzuki S."/>
            <person name="Tagami M."/>
            <person name="Waki K."/>
            <person name="Watahiki A."/>
            <person name="Okamura-Oho Y."/>
            <person name="Suzuki H."/>
            <person name="Kawai J."/>
            <person name="Hayashizaki Y."/>
        </authorList>
    </citation>
    <scope>NUCLEOTIDE SEQUENCE [LARGE SCALE MRNA]</scope>
    <source>
        <strain evidence="6">C57BL/6J</strain>
        <tissue evidence="6">Thymus</tissue>
    </source>
</reference>
<reference key="2">
    <citation type="journal article" date="2009" name="PLoS Biol.">
        <title>Lineage-specific biology revealed by a finished genome assembly of the mouse.</title>
        <authorList>
            <person name="Church D.M."/>
            <person name="Goodstadt L."/>
            <person name="Hillier L.W."/>
            <person name="Zody M.C."/>
            <person name="Goldstein S."/>
            <person name="She X."/>
            <person name="Bult C.J."/>
            <person name="Agarwala R."/>
            <person name="Cherry J.L."/>
            <person name="DiCuccio M."/>
            <person name="Hlavina W."/>
            <person name="Kapustin Y."/>
            <person name="Meric P."/>
            <person name="Maglott D."/>
            <person name="Birtle Z."/>
            <person name="Marques A.C."/>
            <person name="Graves T."/>
            <person name="Zhou S."/>
            <person name="Teague B."/>
            <person name="Potamousis K."/>
            <person name="Churas C."/>
            <person name="Place M."/>
            <person name="Herschleb J."/>
            <person name="Runnheim R."/>
            <person name="Forrest D."/>
            <person name="Amos-Landgraf J."/>
            <person name="Schwartz D.C."/>
            <person name="Cheng Z."/>
            <person name="Lindblad-Toh K."/>
            <person name="Eichler E.E."/>
            <person name="Ponting C.P."/>
        </authorList>
    </citation>
    <scope>NUCLEOTIDE SEQUENCE [LARGE SCALE GENOMIC DNA]</scope>
    <source>
        <strain>C57BL/6J</strain>
    </source>
</reference>
<reference key="3">
    <citation type="journal article" date="2004" name="Genome Res.">
        <title>The status, quality, and expansion of the NIH full-length cDNA project: the Mammalian Gene Collection (MGC).</title>
        <authorList>
            <consortium name="The MGC Project Team"/>
        </authorList>
    </citation>
    <scope>NUCLEOTIDE SEQUENCE [LARGE SCALE MRNA]</scope>
    <source>
        <strain>FVB/N</strain>
        <tissue>Mammary tumor</tissue>
    </source>
</reference>
<reference evidence="5" key="4">
    <citation type="journal article" date="2003" name="Development">
        <title>Lack of pendrin expression leads to deafness and expansion of the endolymphatic compartment in inner ears of Foxi1 null mutant mice.</title>
        <authorList>
            <person name="Hulander M."/>
            <person name="Kiernan A.E."/>
            <person name="Blomqvist S.R."/>
            <person name="Carlsson P."/>
            <person name="Samuelsson E.-J."/>
            <person name="Johansson B.R."/>
            <person name="Steel K.P."/>
            <person name="Enerbaeck S."/>
        </authorList>
    </citation>
    <scope>FUNCTION</scope>
    <scope>DEVELOPMENTAL STAGE</scope>
    <scope>DISRUPTION PHENOTYPE</scope>
</reference>
<reference evidence="5" key="5">
    <citation type="journal article" date="2004" name="J. Clin. Invest.">
        <title>Distal renal tubular acidosis in mice that lack the forkhead transcription factor Foxi1.</title>
        <authorList>
            <person name="Blomqvist S.R."/>
            <person name="Vidarsson H."/>
            <person name="Fitzgerald S."/>
            <person name="Johansson B.R."/>
            <person name="Ollerstam A."/>
            <person name="Brown R."/>
            <person name="Persson A.E.G."/>
            <person name="Bergstroem G."/>
            <person name="Enerbaeck S."/>
        </authorList>
    </citation>
    <scope>FUNCTION</scope>
    <scope>TISSUE SPECIFICITY</scope>
    <scope>DISRUPTION PHENOTYPE</scope>
</reference>
<accession>Q922I5</accession>
<accession>Q5SRI5</accession>
<accession>Q9D299</accession>
<keyword id="KW-0010">Activator</keyword>
<keyword id="KW-0209">Deafness</keyword>
<keyword id="KW-0238">DNA-binding</keyword>
<keyword id="KW-0539">Nucleus</keyword>
<keyword id="KW-1185">Reference proteome</keyword>
<keyword id="KW-0804">Transcription</keyword>
<keyword id="KW-0805">Transcription regulation</keyword>
<comment type="function">
    <text evidence="3 4">Transcriptional activator required for the development of normal hearing, sense of balance and kidney function. Required for the expression of SLC26A4/PDS, JAG1 and COCH in a subset of epithelial cells and the development of the endolymphatic system in the inner ear. Also required for the expression of SLC4A1/AE1, SLC4A9/AE4, ATP6V1B1 and the differentiation of intercalated cells in the epithelium of distal renal tubules.</text>
</comment>
<comment type="subcellular location">
    <subcellularLocation>
        <location>Nucleus</location>
    </subcellularLocation>
</comment>
<comment type="tissue specificity">
    <text evidence="4">Expressed in intercalated cells of the epithelium of the distal renal tubule.</text>
</comment>
<comment type="developmental stage">
    <text evidence="3">Expressed in the entire otic vesicle at stage 9.5 dpc gradually restricted to the epithelium of the endolymphatic ducts at stage 16.5 dpc.</text>
</comment>
<comment type="disruption phenotype">
    <text evidence="3 4">Mice are deaf, impaired in their sense of balance and suffer from distal renal tubular acidosis.</text>
</comment>